<proteinExistence type="inferred from homology"/>
<sequence>MKKIPCVMMRGGTSRGAFLLAEHLPEDQTQRDKILMAIMGSGNDLEIDGIGGGNPLTSKVAIISRSSDPRADVDYLFAQVIVHEQRVDTTPNCGNMLSGVGAFAIENGLIAATSPVTRVRIRNVNTGTFIEADVQTPNGVVEYEGSARIDGVPGTAAPVALTFLNAAGTKTGKVFPTDNQIDYFDDVPVTCIDMAMPVVIIPAEYLGKTGYELPAELDADKALLARIESIRLQAGKAMGLGDVSNMVIPKPVLISPAQKGGAINVRYFMPHSCHRALAITGAIAISSSCALEGTVTRQIVPSVGYGNINIEHPSGALDVHLSNEGQDATTLRASVIRTTRKIFSGEVYLP</sequence>
<name>YBHH_SHIFL</name>
<comment type="similarity">
    <text evidence="1">Belongs to the PrpF family.</text>
</comment>
<comment type="sequence caution" evidence="1">
    <conflict type="erroneous initiation">
        <sequence resource="EMBL-CDS" id="AAN42520"/>
    </conflict>
    <text>Truncated N-terminus.</text>
</comment>
<comment type="sequence caution" evidence="1">
    <conflict type="erroneous initiation">
        <sequence resource="EMBL-CDS" id="AAP16393"/>
    </conflict>
    <text>Truncated N-terminus.</text>
</comment>
<organism>
    <name type="scientific">Shigella flexneri</name>
    <dbReference type="NCBI Taxonomy" id="623"/>
    <lineage>
        <taxon>Bacteria</taxon>
        <taxon>Pseudomonadati</taxon>
        <taxon>Pseudomonadota</taxon>
        <taxon>Gammaproteobacteria</taxon>
        <taxon>Enterobacterales</taxon>
        <taxon>Enterobacteriaceae</taxon>
        <taxon>Shigella</taxon>
    </lineage>
</organism>
<reference key="1">
    <citation type="journal article" date="2002" name="Nucleic Acids Res.">
        <title>Genome sequence of Shigella flexneri 2a: insights into pathogenicity through comparison with genomes of Escherichia coli K12 and O157.</title>
        <authorList>
            <person name="Jin Q."/>
            <person name="Yuan Z."/>
            <person name="Xu J."/>
            <person name="Wang Y."/>
            <person name="Shen Y."/>
            <person name="Lu W."/>
            <person name="Wang J."/>
            <person name="Liu H."/>
            <person name="Yang J."/>
            <person name="Yang F."/>
            <person name="Zhang X."/>
            <person name="Zhang J."/>
            <person name="Yang G."/>
            <person name="Wu H."/>
            <person name="Qu D."/>
            <person name="Dong J."/>
            <person name="Sun L."/>
            <person name="Xue Y."/>
            <person name="Zhao A."/>
            <person name="Gao Y."/>
            <person name="Zhu J."/>
            <person name="Kan B."/>
            <person name="Ding K."/>
            <person name="Chen S."/>
            <person name="Cheng H."/>
            <person name="Yao Z."/>
            <person name="He B."/>
            <person name="Chen R."/>
            <person name="Ma D."/>
            <person name="Qiang B."/>
            <person name="Wen Y."/>
            <person name="Hou Y."/>
            <person name="Yu J."/>
        </authorList>
    </citation>
    <scope>NUCLEOTIDE SEQUENCE [LARGE SCALE GENOMIC DNA]</scope>
    <source>
        <strain>301 / Serotype 2a</strain>
    </source>
</reference>
<reference key="2">
    <citation type="journal article" date="2003" name="Infect. Immun.">
        <title>Complete genome sequence and comparative genomics of Shigella flexneri serotype 2a strain 2457T.</title>
        <authorList>
            <person name="Wei J."/>
            <person name="Goldberg M.B."/>
            <person name="Burland V."/>
            <person name="Venkatesan M.M."/>
            <person name="Deng W."/>
            <person name="Fournier G."/>
            <person name="Mayhew G.F."/>
            <person name="Plunkett G. III"/>
            <person name="Rose D.J."/>
            <person name="Darling A."/>
            <person name="Mau B."/>
            <person name="Perna N.T."/>
            <person name="Payne S.M."/>
            <person name="Runyen-Janecky L.J."/>
            <person name="Zhou S."/>
            <person name="Schwartz D.C."/>
            <person name="Blattner F.R."/>
        </authorList>
    </citation>
    <scope>NUCLEOTIDE SEQUENCE [LARGE SCALE GENOMIC DNA]</scope>
    <source>
        <strain>ATCC 700930 / 2457T / Serotype 2a</strain>
    </source>
</reference>
<evidence type="ECO:0000305" key="1"/>
<protein>
    <recommendedName>
        <fullName>Putative isomerase YbhH</fullName>
        <ecNumber>5.-.-.-</ecNumber>
    </recommendedName>
</protein>
<gene>
    <name type="primary">ybhH</name>
    <name type="ordered locus">SF0890</name>
    <name type="ordered locus">S0937</name>
</gene>
<feature type="chain" id="PRO_0000168713" description="Putative isomerase YbhH">
    <location>
        <begin position="1"/>
        <end position="350"/>
    </location>
</feature>
<feature type="sequence conflict" description="In Ref. 2; AAP16393." evidence="1" ref="2">
    <original>D</original>
    <variation>A</variation>
    <location>
        <position position="44"/>
    </location>
</feature>
<accession>P0AAW0</accession>
<accession>P75762</accession>
<keyword id="KW-0413">Isomerase</keyword>
<keyword id="KW-1185">Reference proteome</keyword>
<dbReference type="EC" id="5.-.-.-"/>
<dbReference type="EMBL" id="AE005674">
    <property type="protein sequence ID" value="AAN42520.2"/>
    <property type="status" value="ALT_INIT"/>
    <property type="molecule type" value="Genomic_DNA"/>
</dbReference>
<dbReference type="EMBL" id="AE014073">
    <property type="protein sequence ID" value="AAP16393.1"/>
    <property type="status" value="ALT_INIT"/>
    <property type="molecule type" value="Genomic_DNA"/>
</dbReference>
<dbReference type="RefSeq" id="NP_706813.2">
    <property type="nucleotide sequence ID" value="NC_004337.2"/>
</dbReference>
<dbReference type="RefSeq" id="WP_000723652.1">
    <property type="nucleotide sequence ID" value="NZ_WPGW01000125.1"/>
</dbReference>
<dbReference type="SMR" id="P0AAW0"/>
<dbReference type="STRING" id="198214.SF0890"/>
<dbReference type="PaxDb" id="198214-SF0890"/>
<dbReference type="GeneID" id="1023868"/>
<dbReference type="KEGG" id="sfl:SF0890"/>
<dbReference type="KEGG" id="sfx:S0937"/>
<dbReference type="PATRIC" id="fig|198214.7.peg.1036"/>
<dbReference type="HOGENOM" id="CLU_026443_2_1_6"/>
<dbReference type="Proteomes" id="UP000001006">
    <property type="component" value="Chromosome"/>
</dbReference>
<dbReference type="Proteomes" id="UP000002673">
    <property type="component" value="Chromosome"/>
</dbReference>
<dbReference type="GO" id="GO:0016853">
    <property type="term" value="F:isomerase activity"/>
    <property type="evidence" value="ECO:0007669"/>
    <property type="project" value="UniProtKB-KW"/>
</dbReference>
<dbReference type="Gene3D" id="3.10.310.10">
    <property type="entry name" value="Diaminopimelate Epimerase, Chain A, domain 1"/>
    <property type="match status" value="2"/>
</dbReference>
<dbReference type="InterPro" id="IPR047687">
    <property type="entry name" value="OMA_tautomer-like"/>
</dbReference>
<dbReference type="InterPro" id="IPR007400">
    <property type="entry name" value="PrpF-like"/>
</dbReference>
<dbReference type="NCBIfam" id="NF033377">
    <property type="entry name" value="OMA_tautomer"/>
    <property type="match status" value="1"/>
</dbReference>
<dbReference type="PANTHER" id="PTHR43709">
    <property type="entry name" value="ACONITATE ISOMERASE-RELATED"/>
    <property type="match status" value="1"/>
</dbReference>
<dbReference type="PANTHER" id="PTHR43709:SF3">
    <property type="entry name" value="ISOMERASE YBHH-RELATED"/>
    <property type="match status" value="1"/>
</dbReference>
<dbReference type="Pfam" id="PF04303">
    <property type="entry name" value="PrpF"/>
    <property type="match status" value="1"/>
</dbReference>
<dbReference type="SUPFAM" id="SSF54506">
    <property type="entry name" value="Diaminopimelate epimerase-like"/>
    <property type="match status" value="2"/>
</dbReference>